<dbReference type="EMBL" id="Y15741">
    <property type="protein sequence ID" value="CAA75751.1"/>
    <property type="molecule type" value="mRNA"/>
</dbReference>
<dbReference type="EMBL" id="AC160393">
    <property type="status" value="NOT_ANNOTATED_CDS"/>
    <property type="molecule type" value="Genomic_DNA"/>
</dbReference>
<dbReference type="EMBL" id="CH466526">
    <property type="protein sequence ID" value="EDL36709.1"/>
    <property type="molecule type" value="Genomic_DNA"/>
</dbReference>
<dbReference type="EMBL" id="BC150762">
    <property type="protein sequence ID" value="AAI50763.1"/>
    <property type="molecule type" value="mRNA"/>
</dbReference>
<dbReference type="CCDS" id="CCDS25923.1"/>
<dbReference type="RefSeq" id="NP_032727.2">
    <property type="nucleotide sequence ID" value="NM_008701.2"/>
</dbReference>
<dbReference type="RefSeq" id="XP_006515596.1">
    <property type="nucleotide sequence ID" value="XM_006515533.3"/>
</dbReference>
<dbReference type="SMR" id="O70584"/>
<dbReference type="FunCoup" id="O70584">
    <property type="interactions" value="887"/>
</dbReference>
<dbReference type="STRING" id="10090.ENSMUSP00000072425"/>
<dbReference type="PaxDb" id="10090-ENSMUSP00000072425"/>
<dbReference type="ProteomicsDB" id="293669"/>
<dbReference type="Antibodypedia" id="9891">
    <property type="antibodies" value="204 antibodies from 28 providers"/>
</dbReference>
<dbReference type="DNASU" id="18094"/>
<dbReference type="Ensembl" id="ENSMUST00000072631.6">
    <property type="protein sequence ID" value="ENSMUSP00000072425.6"/>
    <property type="gene ID" value="ENSMUSG00000058669.8"/>
</dbReference>
<dbReference type="GeneID" id="18094"/>
<dbReference type="KEGG" id="mmu:18094"/>
<dbReference type="UCSC" id="uc007nph.1">
    <property type="organism name" value="mouse"/>
</dbReference>
<dbReference type="AGR" id="MGI:1270158"/>
<dbReference type="CTD" id="18094"/>
<dbReference type="MGI" id="MGI:1270158">
    <property type="gene designation" value="Nkx2-9"/>
</dbReference>
<dbReference type="VEuPathDB" id="HostDB:ENSMUSG00000058669"/>
<dbReference type="eggNOG" id="KOG0842">
    <property type="taxonomic scope" value="Eukaryota"/>
</dbReference>
<dbReference type="GeneTree" id="ENSGT00940000161610"/>
<dbReference type="HOGENOM" id="CLU_049543_0_3_1"/>
<dbReference type="InParanoid" id="O70584"/>
<dbReference type="OMA" id="AWRDFWS"/>
<dbReference type="OrthoDB" id="6159439at2759"/>
<dbReference type="PhylomeDB" id="O70584"/>
<dbReference type="TreeFam" id="TF351204"/>
<dbReference type="BioGRID-ORCS" id="18094">
    <property type="hits" value="3 hits in 76 CRISPR screens"/>
</dbReference>
<dbReference type="PRO" id="PR:O70584"/>
<dbReference type="Proteomes" id="UP000000589">
    <property type="component" value="Chromosome 12"/>
</dbReference>
<dbReference type="RNAct" id="O70584">
    <property type="molecule type" value="protein"/>
</dbReference>
<dbReference type="Bgee" id="ENSMUSG00000058669">
    <property type="expression patterns" value="Expressed in blastoderm cell in morula and 32 other cell types or tissues"/>
</dbReference>
<dbReference type="GO" id="GO:0005634">
    <property type="term" value="C:nucleus"/>
    <property type="evidence" value="ECO:0007669"/>
    <property type="project" value="UniProtKB-SubCell"/>
</dbReference>
<dbReference type="GO" id="GO:0001228">
    <property type="term" value="F:DNA-binding transcription activator activity, RNA polymerase II-specific"/>
    <property type="evidence" value="ECO:0007669"/>
    <property type="project" value="Ensembl"/>
</dbReference>
<dbReference type="GO" id="GO:0000978">
    <property type="term" value="F:RNA polymerase II cis-regulatory region sequence-specific DNA binding"/>
    <property type="evidence" value="ECO:0007669"/>
    <property type="project" value="Ensembl"/>
</dbReference>
<dbReference type="GO" id="GO:0007409">
    <property type="term" value="P:axonogenesis"/>
    <property type="evidence" value="ECO:0000315"/>
    <property type="project" value="MGI"/>
</dbReference>
<dbReference type="GO" id="GO:0050673">
    <property type="term" value="P:epithelial cell proliferation"/>
    <property type="evidence" value="ECO:0000315"/>
    <property type="project" value="MGI"/>
</dbReference>
<dbReference type="GO" id="GO:0030324">
    <property type="term" value="P:lung development"/>
    <property type="evidence" value="ECO:0000315"/>
    <property type="project" value="MGI"/>
</dbReference>
<dbReference type="GO" id="GO:0050680">
    <property type="term" value="P:negative regulation of epithelial cell proliferation"/>
    <property type="evidence" value="ECO:0000315"/>
    <property type="project" value="MGI"/>
</dbReference>
<dbReference type="GO" id="GO:0030323">
    <property type="term" value="P:respiratory tube development"/>
    <property type="evidence" value="ECO:0000315"/>
    <property type="project" value="MGI"/>
</dbReference>
<dbReference type="GO" id="GO:0006366">
    <property type="term" value="P:transcription by RNA polymerase II"/>
    <property type="evidence" value="ECO:0007669"/>
    <property type="project" value="Ensembl"/>
</dbReference>
<dbReference type="CDD" id="cd00086">
    <property type="entry name" value="homeodomain"/>
    <property type="match status" value="1"/>
</dbReference>
<dbReference type="FunFam" id="1.10.10.60:FF:000101">
    <property type="entry name" value="NK2 homeobox 8"/>
    <property type="match status" value="1"/>
</dbReference>
<dbReference type="Gene3D" id="1.10.10.60">
    <property type="entry name" value="Homeodomain-like"/>
    <property type="match status" value="1"/>
</dbReference>
<dbReference type="InterPro" id="IPR001356">
    <property type="entry name" value="HD"/>
</dbReference>
<dbReference type="InterPro" id="IPR020479">
    <property type="entry name" value="HD_metazoa"/>
</dbReference>
<dbReference type="InterPro" id="IPR017970">
    <property type="entry name" value="Homeobox_CS"/>
</dbReference>
<dbReference type="InterPro" id="IPR050394">
    <property type="entry name" value="Homeobox_NK-like"/>
</dbReference>
<dbReference type="InterPro" id="IPR009057">
    <property type="entry name" value="Homeodomain-like_sf"/>
</dbReference>
<dbReference type="PANTHER" id="PTHR24340">
    <property type="entry name" value="HOMEOBOX PROTEIN NKX"/>
    <property type="match status" value="1"/>
</dbReference>
<dbReference type="PANTHER" id="PTHR24340:SF27">
    <property type="entry name" value="HOMEOBOX PROTEIN NKX-2.8"/>
    <property type="match status" value="1"/>
</dbReference>
<dbReference type="Pfam" id="PF00046">
    <property type="entry name" value="Homeodomain"/>
    <property type="match status" value="1"/>
</dbReference>
<dbReference type="PRINTS" id="PR00024">
    <property type="entry name" value="HOMEOBOX"/>
</dbReference>
<dbReference type="SMART" id="SM00389">
    <property type="entry name" value="HOX"/>
    <property type="match status" value="1"/>
</dbReference>
<dbReference type="SUPFAM" id="SSF46689">
    <property type="entry name" value="Homeodomain-like"/>
    <property type="match status" value="1"/>
</dbReference>
<dbReference type="PROSITE" id="PS00027">
    <property type="entry name" value="HOMEOBOX_1"/>
    <property type="match status" value="1"/>
</dbReference>
<dbReference type="PROSITE" id="PS50071">
    <property type="entry name" value="HOMEOBOX_2"/>
    <property type="match status" value="1"/>
</dbReference>
<protein>
    <recommendedName>
        <fullName>Homeobox protein Nkx-2.8</fullName>
    </recommendedName>
    <alternativeName>
        <fullName>Homeobox protein NK-2 homolog H</fullName>
    </alternativeName>
    <alternativeName>
        <fullName>Homeobox protein Nkx-2.9</fullName>
    </alternativeName>
</protein>
<accession>O70584</accession>
<accession>B2RWY9</accession>
<comment type="function">
    <text>Possible role in the specification of a distinct subset of neurons.</text>
</comment>
<comment type="subcellular location">
    <subcellularLocation>
        <location evidence="3">Nucleus</location>
    </subcellularLocation>
</comment>
<comment type="tissue specificity">
    <text>Prominent expression in ventral brain and neural tube structures.</text>
</comment>
<comment type="similarity">
    <text evidence="3">Belongs to the NK-2 homeobox family.</text>
</comment>
<organism>
    <name type="scientific">Mus musculus</name>
    <name type="common">Mouse</name>
    <dbReference type="NCBI Taxonomy" id="10090"/>
    <lineage>
        <taxon>Eukaryota</taxon>
        <taxon>Metazoa</taxon>
        <taxon>Chordata</taxon>
        <taxon>Craniata</taxon>
        <taxon>Vertebrata</taxon>
        <taxon>Euteleostomi</taxon>
        <taxon>Mammalia</taxon>
        <taxon>Eutheria</taxon>
        <taxon>Euarchontoglires</taxon>
        <taxon>Glires</taxon>
        <taxon>Rodentia</taxon>
        <taxon>Myomorpha</taxon>
        <taxon>Muroidea</taxon>
        <taxon>Muridae</taxon>
        <taxon>Murinae</taxon>
        <taxon>Mus</taxon>
        <taxon>Mus</taxon>
    </lineage>
</organism>
<feature type="chain" id="PRO_0000048944" description="Homeobox protein Nkx-2.8">
    <location>
        <begin position="1"/>
        <end position="235"/>
    </location>
</feature>
<feature type="DNA-binding region" description="Homeobox" evidence="1">
    <location>
        <begin position="81"/>
        <end position="140"/>
    </location>
</feature>
<feature type="region of interest" description="Disordered" evidence="2">
    <location>
        <begin position="51"/>
        <end position="86"/>
    </location>
</feature>
<feature type="compositionally biased region" description="Polar residues" evidence="2">
    <location>
        <begin position="51"/>
        <end position="67"/>
    </location>
</feature>
<feature type="compositionally biased region" description="Basic and acidic residues" evidence="2">
    <location>
        <begin position="69"/>
        <end position="80"/>
    </location>
</feature>
<feature type="sequence conflict" description="In Ref. 1; CAA75751." evidence="3" ref="1">
    <original>V</original>
    <variation>M</variation>
    <location>
        <position position="167"/>
    </location>
</feature>
<feature type="sequence conflict" description="In Ref. 1; CAA75751." evidence="3" ref="1">
    <original>D</original>
    <variation>E</variation>
    <location>
        <position position="192"/>
    </location>
</feature>
<feature type="sequence conflict" description="In Ref. 1; CAA75751." evidence="3" ref="1">
    <original>Y</original>
    <variation>N</variation>
    <location>
        <position position="207"/>
    </location>
</feature>
<feature type="sequence conflict" description="In Ref. 1; CAA75751." evidence="3" ref="1">
    <original>P</original>
    <variation>T</variation>
    <location>
        <position position="212"/>
    </location>
</feature>
<reference key="1">
    <citation type="journal article" date="1998" name="Mech. Dev.">
        <title>Nkx2-9 is a novel homeobox transcription factor which demarcates ventral domains in the developing mouse CNS.</title>
        <authorList>
            <person name="Pabst O."/>
            <person name="Herbrand H."/>
            <person name="Arnold H.H."/>
        </authorList>
    </citation>
    <scope>NUCLEOTIDE SEQUENCE [MRNA]</scope>
    <source>
        <strain>129</strain>
    </source>
</reference>
<reference key="2">
    <citation type="journal article" date="2009" name="PLoS Biol.">
        <title>Lineage-specific biology revealed by a finished genome assembly of the mouse.</title>
        <authorList>
            <person name="Church D.M."/>
            <person name="Goodstadt L."/>
            <person name="Hillier L.W."/>
            <person name="Zody M.C."/>
            <person name="Goldstein S."/>
            <person name="She X."/>
            <person name="Bult C.J."/>
            <person name="Agarwala R."/>
            <person name="Cherry J.L."/>
            <person name="DiCuccio M."/>
            <person name="Hlavina W."/>
            <person name="Kapustin Y."/>
            <person name="Meric P."/>
            <person name="Maglott D."/>
            <person name="Birtle Z."/>
            <person name="Marques A.C."/>
            <person name="Graves T."/>
            <person name="Zhou S."/>
            <person name="Teague B."/>
            <person name="Potamousis K."/>
            <person name="Churas C."/>
            <person name="Place M."/>
            <person name="Herschleb J."/>
            <person name="Runnheim R."/>
            <person name="Forrest D."/>
            <person name="Amos-Landgraf J."/>
            <person name="Schwartz D.C."/>
            <person name="Cheng Z."/>
            <person name="Lindblad-Toh K."/>
            <person name="Eichler E.E."/>
            <person name="Ponting C.P."/>
        </authorList>
    </citation>
    <scope>NUCLEOTIDE SEQUENCE [LARGE SCALE GENOMIC DNA]</scope>
    <source>
        <strain>C57BL/6J</strain>
    </source>
</reference>
<reference key="3">
    <citation type="submission" date="2005-07" db="EMBL/GenBank/DDBJ databases">
        <authorList>
            <person name="Mural R.J."/>
            <person name="Adams M.D."/>
            <person name="Myers E.W."/>
            <person name="Smith H.O."/>
            <person name="Venter J.C."/>
        </authorList>
    </citation>
    <scope>NUCLEOTIDE SEQUENCE [LARGE SCALE GENOMIC DNA]</scope>
</reference>
<reference key="4">
    <citation type="journal article" date="2004" name="Genome Res.">
        <title>The status, quality, and expansion of the NIH full-length cDNA project: the Mammalian Gene Collection (MGC).</title>
        <authorList>
            <consortium name="The MGC Project Team"/>
        </authorList>
    </citation>
    <scope>NUCLEOTIDE SEQUENCE [LARGE SCALE MRNA]</scope>
    <source>
        <tissue>Brain</tissue>
    </source>
</reference>
<proteinExistence type="evidence at transcript level"/>
<evidence type="ECO:0000255" key="1">
    <source>
        <dbReference type="PROSITE-ProRule" id="PRU00108"/>
    </source>
</evidence>
<evidence type="ECO:0000256" key="2">
    <source>
        <dbReference type="SAM" id="MobiDB-lite"/>
    </source>
</evidence>
<evidence type="ECO:0000305" key="3"/>
<name>NKX28_MOUSE</name>
<keyword id="KW-0217">Developmental protein</keyword>
<keyword id="KW-0238">DNA-binding</keyword>
<keyword id="KW-0371">Homeobox</keyword>
<keyword id="KW-0539">Nucleus</keyword>
<keyword id="KW-1185">Reference proteome</keyword>
<gene>
    <name type="primary">Nkx2-8</name>
    <name type="synonym">Nkx-2.9</name>
    <name type="synonym">Nkx2-9</name>
    <name type="synonym">Nkx2h</name>
</gene>
<sequence length="235" mass="26133">MATSGRLGFTVRSLLNLPEQDAKPRVRREQQTCVPQTAAWLESECSHYLSSDESGLETSPADSSQLASLRRESPGSDPEKRRKRRVLFSKAQTLELERRFRQQRYLSAPEREQLARLLRLTPTQVKIWFQNHRYKLKRGRAPGITEPSDMAASSDLHAAPGLLRRVVVPVLVHDRPPSNNGRGEGTSAVPQDKCSARLATACPVPGYTAFGPGSALGLFPAYQHLAPPALVSWNW</sequence>